<reference key="1">
    <citation type="journal article" date="2004" name="Proc. Natl. Acad. Sci. U.S.A.">
        <title>Genome sequence of Picrophilus torridus and its implications for life around pH 0.</title>
        <authorList>
            <person name="Fuetterer O."/>
            <person name="Angelov A."/>
            <person name="Liesegang H."/>
            <person name="Gottschalk G."/>
            <person name="Schleper C."/>
            <person name="Schepers B."/>
            <person name="Dock C."/>
            <person name="Antranikian G."/>
            <person name="Liebl W."/>
        </authorList>
    </citation>
    <scope>NUCLEOTIDE SEQUENCE [LARGE SCALE GENOMIC DNA]</scope>
    <source>
        <strain>ATCC 700027 / DSM 9790 / JCM 10055 / NBRC 100828 / KAW 2/3</strain>
    </source>
</reference>
<feature type="chain" id="PRO_0000141559" description="Small ribosomal subunit protein eS17">
    <location>
        <begin position="1"/>
        <end position="76"/>
    </location>
</feature>
<name>RS17E_PICTO</name>
<accession>Q6L0U7</accession>
<sequence length="76" mass="8647">MGSIRPSNIKRIAEEIVDNNPGIFNEDFENNKKILSEMLKNSVTKKTMNAIAGYVTRYILKKKSKEKSEMEQLGLA</sequence>
<evidence type="ECO:0000255" key="1">
    <source>
        <dbReference type="HAMAP-Rule" id="MF_00511"/>
    </source>
</evidence>
<evidence type="ECO:0000305" key="2"/>
<dbReference type="EMBL" id="AE017261">
    <property type="protein sequence ID" value="AAT43405.1"/>
    <property type="molecule type" value="Genomic_DNA"/>
</dbReference>
<dbReference type="RefSeq" id="WP_011177621.1">
    <property type="nucleotide sequence ID" value="NC_005877.1"/>
</dbReference>
<dbReference type="SMR" id="Q6L0U7"/>
<dbReference type="FunCoup" id="Q6L0U7">
    <property type="interactions" value="69"/>
</dbReference>
<dbReference type="STRING" id="263820.PTO0820"/>
<dbReference type="PaxDb" id="263820-PTO0820"/>
<dbReference type="GeneID" id="2844500"/>
<dbReference type="KEGG" id="pto:PTO0820"/>
<dbReference type="eggNOG" id="arCOG01885">
    <property type="taxonomic scope" value="Archaea"/>
</dbReference>
<dbReference type="HOGENOM" id="CLU_176720_0_0_2"/>
<dbReference type="InParanoid" id="Q6L0U7"/>
<dbReference type="OrthoDB" id="52479at2157"/>
<dbReference type="Proteomes" id="UP000000438">
    <property type="component" value="Chromosome"/>
</dbReference>
<dbReference type="GO" id="GO:1990904">
    <property type="term" value="C:ribonucleoprotein complex"/>
    <property type="evidence" value="ECO:0007669"/>
    <property type="project" value="UniProtKB-KW"/>
</dbReference>
<dbReference type="GO" id="GO:0005840">
    <property type="term" value="C:ribosome"/>
    <property type="evidence" value="ECO:0007669"/>
    <property type="project" value="UniProtKB-KW"/>
</dbReference>
<dbReference type="GO" id="GO:0003735">
    <property type="term" value="F:structural constituent of ribosome"/>
    <property type="evidence" value="ECO:0007669"/>
    <property type="project" value="InterPro"/>
</dbReference>
<dbReference type="GO" id="GO:0006412">
    <property type="term" value="P:translation"/>
    <property type="evidence" value="ECO:0007669"/>
    <property type="project" value="UniProtKB-UniRule"/>
</dbReference>
<dbReference type="Gene3D" id="1.10.60.20">
    <property type="entry name" value="Ribosomal protein S17e-like"/>
    <property type="match status" value="1"/>
</dbReference>
<dbReference type="HAMAP" id="MF_00511">
    <property type="entry name" value="Ribosomal_eS17"/>
    <property type="match status" value="1"/>
</dbReference>
<dbReference type="InterPro" id="IPR001210">
    <property type="entry name" value="Ribosomal_eS17"/>
</dbReference>
<dbReference type="InterPro" id="IPR018273">
    <property type="entry name" value="Ribosomal_eS17_CS"/>
</dbReference>
<dbReference type="InterPro" id="IPR036401">
    <property type="entry name" value="Ribosomal_eS17_sf"/>
</dbReference>
<dbReference type="NCBIfam" id="NF002242">
    <property type="entry name" value="PRK01151.1"/>
    <property type="match status" value="1"/>
</dbReference>
<dbReference type="Pfam" id="PF00833">
    <property type="entry name" value="Ribosomal_S17e"/>
    <property type="match status" value="1"/>
</dbReference>
<dbReference type="SUPFAM" id="SSF116820">
    <property type="entry name" value="Rps17e-like"/>
    <property type="match status" value="1"/>
</dbReference>
<dbReference type="PROSITE" id="PS00712">
    <property type="entry name" value="RIBOSOMAL_S17E"/>
    <property type="match status" value="1"/>
</dbReference>
<keyword id="KW-0687">Ribonucleoprotein</keyword>
<keyword id="KW-0689">Ribosomal protein</keyword>
<protein>
    <recommendedName>
        <fullName evidence="1">Small ribosomal subunit protein eS17</fullName>
    </recommendedName>
    <alternativeName>
        <fullName evidence="2">30S ribosomal protein S17e</fullName>
    </alternativeName>
</protein>
<gene>
    <name evidence="1" type="primary">rps17e</name>
    <name type="ordered locus">PTO0820</name>
</gene>
<comment type="similarity">
    <text evidence="1">Belongs to the eukaryotic ribosomal protein eS17 family.</text>
</comment>
<proteinExistence type="inferred from homology"/>
<organism>
    <name type="scientific">Picrophilus torridus (strain ATCC 700027 / DSM 9790 / JCM 10055 / NBRC 100828 / KAW 2/3)</name>
    <dbReference type="NCBI Taxonomy" id="1122961"/>
    <lineage>
        <taxon>Archaea</taxon>
        <taxon>Methanobacteriati</taxon>
        <taxon>Thermoplasmatota</taxon>
        <taxon>Thermoplasmata</taxon>
        <taxon>Thermoplasmatales</taxon>
        <taxon>Picrophilaceae</taxon>
        <taxon>Picrophilus</taxon>
    </lineage>
</organism>